<sequence>MMITLTGHTLTVEEMKRLLLEGEGVTACPTSMQKVAECREVVEKIVEDGKVVYGITTGFGKFSDVLIQKDDVKALQHNLIQSHACGIGDPFPEEVSRGMLILRANTMLKGVSGVRPLVVNMLLEFVNRKIHPVVPQQGSLGASGDLAPLSHLALVLLGEGEVFYKGKRVHAMVALTEEGLEPIELEAKEGLALINGTQAMTAQGVLSYIEAEATAYQAELIASMTIEGLQGIIDAFDENVHKARGYKEQVDVASRIRDILHDSKLTTKQGELRVQDAYSLRCIPQVHGASWQVLNYVKEKLEIEMNAATDNPLIFDGGEKVISGGNFHGQPIAFAMDFLKVGMAELANISERRIERLVNPQLNDLPPFLSPEPGLQSGAMIMQYAAASLVSENKTLAHPASVDSIPSSANQEDHVSMGTIASRHAHQIIQNVRRVLSIEMICAMQAAEYRGIENMSTVTKSFYHQGRQQVPSITNDRIFSTDIENIAHWLKASDSIKERLDVNAAL</sequence>
<evidence type="ECO:0000255" key="1">
    <source>
        <dbReference type="HAMAP-Rule" id="MF_00229"/>
    </source>
</evidence>
<organism>
    <name type="scientific">Bacillus cereus (strain ATCC 14579 / DSM 31 / CCUG 7414 / JCM 2152 / NBRC 15305 / NCIMB 9373 / NCTC 2599 / NRRL B-3711)</name>
    <dbReference type="NCBI Taxonomy" id="226900"/>
    <lineage>
        <taxon>Bacteria</taxon>
        <taxon>Bacillati</taxon>
        <taxon>Bacillota</taxon>
        <taxon>Bacilli</taxon>
        <taxon>Bacillales</taxon>
        <taxon>Bacillaceae</taxon>
        <taxon>Bacillus</taxon>
        <taxon>Bacillus cereus group</taxon>
    </lineage>
</organism>
<dbReference type="EC" id="4.3.1.3" evidence="1"/>
<dbReference type="EMBL" id="AE016877">
    <property type="protein sequence ID" value="AAP10581.1"/>
    <property type="molecule type" value="Genomic_DNA"/>
</dbReference>
<dbReference type="RefSeq" id="NP_833380.1">
    <property type="nucleotide sequence ID" value="NC_004722.1"/>
</dbReference>
<dbReference type="SMR" id="Q81AC6"/>
<dbReference type="STRING" id="226900.BC_3652"/>
<dbReference type="KEGG" id="bce:BC3652"/>
<dbReference type="PATRIC" id="fig|226900.8.peg.3754"/>
<dbReference type="HOGENOM" id="CLU_014801_4_0_9"/>
<dbReference type="UniPathway" id="UPA00379">
    <property type="reaction ID" value="UER00549"/>
</dbReference>
<dbReference type="Proteomes" id="UP000001417">
    <property type="component" value="Chromosome"/>
</dbReference>
<dbReference type="GO" id="GO:0005737">
    <property type="term" value="C:cytoplasm"/>
    <property type="evidence" value="ECO:0007669"/>
    <property type="project" value="UniProtKB-SubCell"/>
</dbReference>
<dbReference type="GO" id="GO:0004397">
    <property type="term" value="F:histidine ammonia-lyase activity"/>
    <property type="evidence" value="ECO:0000318"/>
    <property type="project" value="GO_Central"/>
</dbReference>
<dbReference type="GO" id="GO:0006548">
    <property type="term" value="P:L-histidine catabolic process"/>
    <property type="evidence" value="ECO:0000318"/>
    <property type="project" value="GO_Central"/>
</dbReference>
<dbReference type="GO" id="GO:0019556">
    <property type="term" value="P:L-histidine catabolic process to glutamate and formamide"/>
    <property type="evidence" value="ECO:0007669"/>
    <property type="project" value="UniProtKB-UniPathway"/>
</dbReference>
<dbReference type="GO" id="GO:0019557">
    <property type="term" value="P:L-histidine catabolic process to glutamate and formate"/>
    <property type="evidence" value="ECO:0007669"/>
    <property type="project" value="UniProtKB-UniPathway"/>
</dbReference>
<dbReference type="CDD" id="cd00332">
    <property type="entry name" value="PAL-HAL"/>
    <property type="match status" value="1"/>
</dbReference>
<dbReference type="FunFam" id="1.10.275.10:FF:000008">
    <property type="entry name" value="Histidine ammonia-lyase"/>
    <property type="match status" value="1"/>
</dbReference>
<dbReference type="FunFam" id="1.20.200.10:FF:000003">
    <property type="entry name" value="Histidine ammonia-lyase"/>
    <property type="match status" value="1"/>
</dbReference>
<dbReference type="Gene3D" id="1.20.200.10">
    <property type="entry name" value="Fumarase/aspartase (Central domain)"/>
    <property type="match status" value="1"/>
</dbReference>
<dbReference type="Gene3D" id="1.10.275.10">
    <property type="entry name" value="Fumarase/aspartase (N-terminal domain)"/>
    <property type="match status" value="1"/>
</dbReference>
<dbReference type="HAMAP" id="MF_00229">
    <property type="entry name" value="His_ammonia_lyase"/>
    <property type="match status" value="1"/>
</dbReference>
<dbReference type="InterPro" id="IPR001106">
    <property type="entry name" value="Aromatic_Lyase"/>
</dbReference>
<dbReference type="InterPro" id="IPR024083">
    <property type="entry name" value="Fumarase/histidase_N"/>
</dbReference>
<dbReference type="InterPro" id="IPR005921">
    <property type="entry name" value="HutH"/>
</dbReference>
<dbReference type="InterPro" id="IPR008948">
    <property type="entry name" value="L-Aspartase-like"/>
</dbReference>
<dbReference type="InterPro" id="IPR022313">
    <property type="entry name" value="Phe/His_NH3-lyase_AS"/>
</dbReference>
<dbReference type="NCBIfam" id="TIGR01225">
    <property type="entry name" value="hutH"/>
    <property type="match status" value="1"/>
</dbReference>
<dbReference type="NCBIfam" id="NF006871">
    <property type="entry name" value="PRK09367.1"/>
    <property type="match status" value="1"/>
</dbReference>
<dbReference type="PANTHER" id="PTHR10362">
    <property type="entry name" value="HISTIDINE AMMONIA-LYASE"/>
    <property type="match status" value="1"/>
</dbReference>
<dbReference type="Pfam" id="PF00221">
    <property type="entry name" value="Lyase_aromatic"/>
    <property type="match status" value="1"/>
</dbReference>
<dbReference type="SUPFAM" id="SSF48557">
    <property type="entry name" value="L-aspartase-like"/>
    <property type="match status" value="1"/>
</dbReference>
<dbReference type="PROSITE" id="PS00488">
    <property type="entry name" value="PAL_HISTIDASE"/>
    <property type="match status" value="1"/>
</dbReference>
<name>HUTH_BACCR</name>
<keyword id="KW-0963">Cytoplasm</keyword>
<keyword id="KW-0369">Histidine metabolism</keyword>
<keyword id="KW-0456">Lyase</keyword>
<keyword id="KW-1185">Reference proteome</keyword>
<comment type="catalytic activity">
    <reaction evidence="1">
        <text>L-histidine = trans-urocanate + NH4(+)</text>
        <dbReference type="Rhea" id="RHEA:21232"/>
        <dbReference type="ChEBI" id="CHEBI:17771"/>
        <dbReference type="ChEBI" id="CHEBI:28938"/>
        <dbReference type="ChEBI" id="CHEBI:57595"/>
        <dbReference type="EC" id="4.3.1.3"/>
    </reaction>
</comment>
<comment type="pathway">
    <text evidence="1">Amino-acid degradation; L-histidine degradation into L-glutamate; N-formimidoyl-L-glutamate from L-histidine: step 1/3.</text>
</comment>
<comment type="subcellular location">
    <subcellularLocation>
        <location evidence="1">Cytoplasm</location>
    </subcellularLocation>
</comment>
<comment type="PTM">
    <text evidence="1">Contains an active site 4-methylidene-imidazol-5-one (MIO), which is formed autocatalytically by cyclization and dehydration of residues Ala-Ser-Gly.</text>
</comment>
<comment type="similarity">
    <text evidence="1">Belongs to the PAL/histidase family.</text>
</comment>
<accession>Q81AC6</accession>
<proteinExistence type="inferred from homology"/>
<reference key="1">
    <citation type="journal article" date="2003" name="Nature">
        <title>Genome sequence of Bacillus cereus and comparative analysis with Bacillus anthracis.</title>
        <authorList>
            <person name="Ivanova N."/>
            <person name="Sorokin A."/>
            <person name="Anderson I."/>
            <person name="Galleron N."/>
            <person name="Candelon B."/>
            <person name="Kapatral V."/>
            <person name="Bhattacharyya A."/>
            <person name="Reznik G."/>
            <person name="Mikhailova N."/>
            <person name="Lapidus A."/>
            <person name="Chu L."/>
            <person name="Mazur M."/>
            <person name="Goltsman E."/>
            <person name="Larsen N."/>
            <person name="D'Souza M."/>
            <person name="Walunas T."/>
            <person name="Grechkin Y."/>
            <person name="Pusch G."/>
            <person name="Haselkorn R."/>
            <person name="Fonstein M."/>
            <person name="Ehrlich S.D."/>
            <person name="Overbeek R."/>
            <person name="Kyrpides N.C."/>
        </authorList>
    </citation>
    <scope>NUCLEOTIDE SEQUENCE [LARGE SCALE GENOMIC DNA]</scope>
    <source>
        <strain>ATCC 14579 / DSM 31 / CCUG 7414 / JCM 2152 / NBRC 15305 / NCIMB 9373 / NCTC 2599 / NRRL B-3711</strain>
    </source>
</reference>
<protein>
    <recommendedName>
        <fullName evidence="1">Histidine ammonia-lyase</fullName>
        <shortName evidence="1">Histidase</shortName>
        <ecNumber evidence="1">4.3.1.3</ecNumber>
    </recommendedName>
</protein>
<feature type="chain" id="PRO_0000160987" description="Histidine ammonia-lyase">
    <location>
        <begin position="1"/>
        <end position="506"/>
    </location>
</feature>
<feature type="modified residue" description="2,3-didehydroalanine (Ser)" evidence="1">
    <location>
        <position position="143"/>
    </location>
</feature>
<feature type="cross-link" description="5-imidazolinone (Ala-Gly)" evidence="1">
    <location>
        <begin position="142"/>
        <end position="144"/>
    </location>
</feature>
<gene>
    <name evidence="1" type="primary">hutH</name>
    <name type="ordered locus">BC_3652</name>
</gene>